<feature type="chain" id="PRO_0000185955" description="Inactive glutathione S-transferase D3">
    <location>
        <begin position="1"/>
        <end position="199"/>
    </location>
</feature>
<feature type="domain" description="GST N-terminal">
    <location>
        <begin position="1"/>
        <end position="64"/>
    </location>
</feature>
<feature type="domain" description="GST C-terminal">
    <location>
        <begin position="70"/>
        <end position="199"/>
    </location>
</feature>
<feature type="binding site" evidence="1">
    <location>
        <begin position="34"/>
        <end position="36"/>
    </location>
    <ligand>
        <name>glutathione</name>
        <dbReference type="ChEBI" id="CHEBI:57925"/>
    </ligand>
</feature>
<feature type="binding site" evidence="1">
    <location>
        <begin position="48"/>
        <end position="50"/>
    </location>
    <ligand>
        <name>glutathione</name>
        <dbReference type="ChEBI" id="CHEBI:57925"/>
    </ligand>
</feature>
<evidence type="ECO:0000250" key="1"/>
<evidence type="ECO:0000250" key="2">
    <source>
        <dbReference type="UniProtKB" id="P30711"/>
    </source>
</evidence>
<evidence type="ECO:0000269" key="3">
    <source>
    </source>
</evidence>
<evidence type="ECO:0000303" key="4">
    <source>
    </source>
</evidence>
<evidence type="ECO:0000305" key="5"/>
<evidence type="ECO:0000312" key="6">
    <source>
        <dbReference type="FlyBase" id="FBgn0010039"/>
    </source>
</evidence>
<name>GSTD3_DROME</name>
<accession>Q9VG97</accession>
<accession>Q8MT68</accession>
<organism>
    <name type="scientific">Drosophila melanogaster</name>
    <name type="common">Fruit fly</name>
    <dbReference type="NCBI Taxonomy" id="7227"/>
    <lineage>
        <taxon>Eukaryota</taxon>
        <taxon>Metazoa</taxon>
        <taxon>Ecdysozoa</taxon>
        <taxon>Arthropoda</taxon>
        <taxon>Hexapoda</taxon>
        <taxon>Insecta</taxon>
        <taxon>Pterygota</taxon>
        <taxon>Neoptera</taxon>
        <taxon>Endopterygota</taxon>
        <taxon>Diptera</taxon>
        <taxon>Brachycera</taxon>
        <taxon>Muscomorpha</taxon>
        <taxon>Ephydroidea</taxon>
        <taxon>Drosophilidae</taxon>
        <taxon>Drosophila</taxon>
        <taxon>Sophophora</taxon>
    </lineage>
</organism>
<sequence length="199" mass="22907">MVGKALGLEFNKKIINTLKGEQMNPDFIKINPQHSIPTLVDNGFTIWESRAILVYLVEKYGKDDALYPKDIQKQAVINQRLYFDMALMYPTLANYYYKAFTTGQFGSEEDYKKVQETFDFLNTFLEGQDYVAGDQYTVADIAILANVSNFDVVGFDISKYPNVARWYDHVKKITPGWEENWAGALDVKKRIEEKQNAAK</sequence>
<dbReference type="EMBL" id="M97702">
    <property type="status" value="NOT_ANNOTATED_CDS"/>
    <property type="molecule type" value="Genomic_DNA"/>
</dbReference>
<dbReference type="EMBL" id="AE014297">
    <property type="protein sequence ID" value="AAO41561.1"/>
    <property type="molecule type" value="Genomic_DNA"/>
</dbReference>
<dbReference type="EMBL" id="AY118350">
    <property type="protein sequence ID" value="AAM48379.3"/>
    <property type="status" value="ALT_INIT"/>
    <property type="molecule type" value="mRNA"/>
</dbReference>
<dbReference type="PIR" id="A46681">
    <property type="entry name" value="A46681"/>
</dbReference>
<dbReference type="RefSeq" id="NP_788656.1">
    <property type="nucleotide sequence ID" value="NM_176479.2"/>
</dbReference>
<dbReference type="SMR" id="Q9VG97"/>
<dbReference type="BioGRID" id="71333">
    <property type="interactions" value="3"/>
</dbReference>
<dbReference type="FunCoup" id="Q9VG97">
    <property type="interactions" value="304"/>
</dbReference>
<dbReference type="IntAct" id="Q9VG97">
    <property type="interactions" value="1"/>
</dbReference>
<dbReference type="STRING" id="7227.FBpp0082042"/>
<dbReference type="PaxDb" id="7227-FBpp0082042"/>
<dbReference type="DNASU" id="48336"/>
<dbReference type="EnsemblMetazoa" id="FBtr0082570">
    <property type="protein sequence ID" value="FBpp0082042"/>
    <property type="gene ID" value="FBgn0010039"/>
</dbReference>
<dbReference type="GeneID" id="48336"/>
<dbReference type="KEGG" id="dme:Dmel_CG4381"/>
<dbReference type="AGR" id="FB:FBgn0010039"/>
<dbReference type="CTD" id="48336"/>
<dbReference type="FlyBase" id="FBgn0010039">
    <property type="gene designation" value="GstD3"/>
</dbReference>
<dbReference type="VEuPathDB" id="VectorBase:FBgn0010039"/>
<dbReference type="eggNOG" id="KOG0867">
    <property type="taxonomic scope" value="Eukaryota"/>
</dbReference>
<dbReference type="GeneTree" id="ENSGT00940000164816"/>
<dbReference type="HOGENOM" id="CLU_011226_2_1_1"/>
<dbReference type="InParanoid" id="Q9VG97"/>
<dbReference type="OMA" id="QKVVWCA"/>
<dbReference type="OrthoDB" id="2309723at2759"/>
<dbReference type="PhylomeDB" id="Q9VG97"/>
<dbReference type="BioGRID-ORCS" id="48336">
    <property type="hits" value="0 hits in 1 CRISPR screen"/>
</dbReference>
<dbReference type="GenomeRNAi" id="48336"/>
<dbReference type="PRO" id="PR:Q9VG97"/>
<dbReference type="Proteomes" id="UP000000803">
    <property type="component" value="Chromosome 3R"/>
</dbReference>
<dbReference type="Bgee" id="FBgn0010039">
    <property type="expression patterns" value="Expressed in reticular neuropil associated glial cell (Drosophila) in brain and 82 other cell types or tissues"/>
</dbReference>
<dbReference type="GO" id="GO:0005737">
    <property type="term" value="C:cytoplasm"/>
    <property type="evidence" value="ECO:0000250"/>
    <property type="project" value="FlyBase"/>
</dbReference>
<dbReference type="GO" id="GO:0006749">
    <property type="term" value="P:glutathione metabolic process"/>
    <property type="evidence" value="ECO:0000318"/>
    <property type="project" value="GO_Central"/>
</dbReference>
<dbReference type="CDD" id="cd03177">
    <property type="entry name" value="GST_C_Delta_Epsilon"/>
    <property type="match status" value="1"/>
</dbReference>
<dbReference type="CDD" id="cd03045">
    <property type="entry name" value="GST_N_Delta_Epsilon"/>
    <property type="match status" value="1"/>
</dbReference>
<dbReference type="FunFam" id="3.40.30.10:FF:000034">
    <property type="entry name" value="glutathione S-transferase 1"/>
    <property type="match status" value="1"/>
</dbReference>
<dbReference type="FunFam" id="1.20.1050.10:FF:000007">
    <property type="entry name" value="Glutathione S-transferase 1-1"/>
    <property type="match status" value="1"/>
</dbReference>
<dbReference type="Gene3D" id="1.20.1050.10">
    <property type="match status" value="1"/>
</dbReference>
<dbReference type="Gene3D" id="3.40.30.10">
    <property type="entry name" value="Glutaredoxin"/>
    <property type="match status" value="1"/>
</dbReference>
<dbReference type="InterPro" id="IPR010987">
    <property type="entry name" value="Glutathione-S-Trfase_C-like"/>
</dbReference>
<dbReference type="InterPro" id="IPR036282">
    <property type="entry name" value="Glutathione-S-Trfase_C_sf"/>
</dbReference>
<dbReference type="InterPro" id="IPR040079">
    <property type="entry name" value="Glutathione_S-Trfase"/>
</dbReference>
<dbReference type="InterPro" id="IPR004045">
    <property type="entry name" value="Glutathione_S-Trfase_N"/>
</dbReference>
<dbReference type="InterPro" id="IPR036249">
    <property type="entry name" value="Thioredoxin-like_sf"/>
</dbReference>
<dbReference type="PANTHER" id="PTHR43969">
    <property type="entry name" value="GLUTATHIONE S TRANSFERASE D10, ISOFORM A-RELATED"/>
    <property type="match status" value="1"/>
</dbReference>
<dbReference type="PANTHER" id="PTHR43969:SF9">
    <property type="entry name" value="GLUTATHIONE S TRANSFERASE D10, ISOFORM A-RELATED"/>
    <property type="match status" value="1"/>
</dbReference>
<dbReference type="Pfam" id="PF13410">
    <property type="entry name" value="GST_C_2"/>
    <property type="match status" value="1"/>
</dbReference>
<dbReference type="Pfam" id="PF02798">
    <property type="entry name" value="GST_N"/>
    <property type="match status" value="1"/>
</dbReference>
<dbReference type="SFLD" id="SFLDS00019">
    <property type="entry name" value="Glutathione_Transferase_(cytos"/>
    <property type="match status" value="1"/>
</dbReference>
<dbReference type="SFLD" id="SFLDG00358">
    <property type="entry name" value="Main_(cytGST)"/>
    <property type="match status" value="1"/>
</dbReference>
<dbReference type="SUPFAM" id="SSF47616">
    <property type="entry name" value="GST C-terminal domain-like"/>
    <property type="match status" value="1"/>
</dbReference>
<dbReference type="SUPFAM" id="SSF52833">
    <property type="entry name" value="Thioredoxin-like"/>
    <property type="match status" value="1"/>
</dbReference>
<dbReference type="PROSITE" id="PS50405">
    <property type="entry name" value="GST_CTER"/>
    <property type="match status" value="1"/>
</dbReference>
<dbReference type="PROSITE" id="PS50404">
    <property type="entry name" value="GST_NTER"/>
    <property type="match status" value="1"/>
</dbReference>
<comment type="function">
    <text evidence="3">Has no glutathione S-transferase activity.</text>
</comment>
<comment type="subunit">
    <text evidence="2">Homodimer.</text>
</comment>
<comment type="similarity">
    <text evidence="4">Belongs to the GST superfamily. Delta family.</text>
</comment>
<comment type="caution">
    <text evidence="3">In vitro shows no activity towards glutathione. Lacks 16 amino acids at the N-terminus including a glutathione binding site known to be important for catalysis.</text>
</comment>
<comment type="sequence caution" evidence="5">
    <conflict type="erroneous initiation">
        <sequence resource="EMBL-CDS" id="AAM48379"/>
    </conflict>
    <text>Extended N-terminus.</text>
</comment>
<protein>
    <recommendedName>
        <fullName evidence="4">Inactive glutathione S-transferase D3</fullName>
    </recommendedName>
</protein>
<proteinExistence type="evidence at transcript level"/>
<gene>
    <name evidence="6" type="primary">GstD3</name>
    <name type="synonym">gstD22</name>
    <name evidence="6" type="synonym">GSTD3-3</name>
    <name evidence="6" type="ORF">CG4381</name>
</gene>
<reference key="1">
    <citation type="journal article" date="1993" name="J. Biol. Chem.">
        <title>The glutathione S-transferase D genes. A divergently organized, intronless gene family in Drosophila melanogaster.</title>
        <authorList>
            <person name="Toung Y.-P.S."/>
            <person name="Hsieh T.-S."/>
            <person name="Tu C.-P.D."/>
        </authorList>
    </citation>
    <scope>NUCLEOTIDE SEQUENCE [GENOMIC DNA]</scope>
</reference>
<reference key="2">
    <citation type="journal article" date="2000" name="Science">
        <title>The genome sequence of Drosophila melanogaster.</title>
        <authorList>
            <person name="Adams M.D."/>
            <person name="Celniker S.E."/>
            <person name="Holt R.A."/>
            <person name="Evans C.A."/>
            <person name="Gocayne J.D."/>
            <person name="Amanatides P.G."/>
            <person name="Scherer S.E."/>
            <person name="Li P.W."/>
            <person name="Hoskins R.A."/>
            <person name="Galle R.F."/>
            <person name="George R.A."/>
            <person name="Lewis S.E."/>
            <person name="Richards S."/>
            <person name="Ashburner M."/>
            <person name="Henderson S.N."/>
            <person name="Sutton G.G."/>
            <person name="Wortman J.R."/>
            <person name="Yandell M.D."/>
            <person name="Zhang Q."/>
            <person name="Chen L.X."/>
            <person name="Brandon R.C."/>
            <person name="Rogers Y.-H.C."/>
            <person name="Blazej R.G."/>
            <person name="Champe M."/>
            <person name="Pfeiffer B.D."/>
            <person name="Wan K.H."/>
            <person name="Doyle C."/>
            <person name="Baxter E.G."/>
            <person name="Helt G."/>
            <person name="Nelson C.R."/>
            <person name="Miklos G.L.G."/>
            <person name="Abril J.F."/>
            <person name="Agbayani A."/>
            <person name="An H.-J."/>
            <person name="Andrews-Pfannkoch C."/>
            <person name="Baldwin D."/>
            <person name="Ballew R.M."/>
            <person name="Basu A."/>
            <person name="Baxendale J."/>
            <person name="Bayraktaroglu L."/>
            <person name="Beasley E.M."/>
            <person name="Beeson K.Y."/>
            <person name="Benos P.V."/>
            <person name="Berman B.P."/>
            <person name="Bhandari D."/>
            <person name="Bolshakov S."/>
            <person name="Borkova D."/>
            <person name="Botchan M.R."/>
            <person name="Bouck J."/>
            <person name="Brokstein P."/>
            <person name="Brottier P."/>
            <person name="Burtis K.C."/>
            <person name="Busam D.A."/>
            <person name="Butler H."/>
            <person name="Cadieu E."/>
            <person name="Center A."/>
            <person name="Chandra I."/>
            <person name="Cherry J.M."/>
            <person name="Cawley S."/>
            <person name="Dahlke C."/>
            <person name="Davenport L.B."/>
            <person name="Davies P."/>
            <person name="de Pablos B."/>
            <person name="Delcher A."/>
            <person name="Deng Z."/>
            <person name="Mays A.D."/>
            <person name="Dew I."/>
            <person name="Dietz S.M."/>
            <person name="Dodson K."/>
            <person name="Doup L.E."/>
            <person name="Downes M."/>
            <person name="Dugan-Rocha S."/>
            <person name="Dunkov B.C."/>
            <person name="Dunn P."/>
            <person name="Durbin K.J."/>
            <person name="Evangelista C.C."/>
            <person name="Ferraz C."/>
            <person name="Ferriera S."/>
            <person name="Fleischmann W."/>
            <person name="Fosler C."/>
            <person name="Gabrielian A.E."/>
            <person name="Garg N.S."/>
            <person name="Gelbart W.M."/>
            <person name="Glasser K."/>
            <person name="Glodek A."/>
            <person name="Gong F."/>
            <person name="Gorrell J.H."/>
            <person name="Gu Z."/>
            <person name="Guan P."/>
            <person name="Harris M."/>
            <person name="Harris N.L."/>
            <person name="Harvey D.A."/>
            <person name="Heiman T.J."/>
            <person name="Hernandez J.R."/>
            <person name="Houck J."/>
            <person name="Hostin D."/>
            <person name="Houston K.A."/>
            <person name="Howland T.J."/>
            <person name="Wei M.-H."/>
            <person name="Ibegwam C."/>
            <person name="Jalali M."/>
            <person name="Kalush F."/>
            <person name="Karpen G.H."/>
            <person name="Ke Z."/>
            <person name="Kennison J.A."/>
            <person name="Ketchum K.A."/>
            <person name="Kimmel B.E."/>
            <person name="Kodira C.D."/>
            <person name="Kraft C.L."/>
            <person name="Kravitz S."/>
            <person name="Kulp D."/>
            <person name="Lai Z."/>
            <person name="Lasko P."/>
            <person name="Lei Y."/>
            <person name="Levitsky A.A."/>
            <person name="Li J.H."/>
            <person name="Li Z."/>
            <person name="Liang Y."/>
            <person name="Lin X."/>
            <person name="Liu X."/>
            <person name="Mattei B."/>
            <person name="McIntosh T.C."/>
            <person name="McLeod M.P."/>
            <person name="McPherson D."/>
            <person name="Merkulov G."/>
            <person name="Milshina N.V."/>
            <person name="Mobarry C."/>
            <person name="Morris J."/>
            <person name="Moshrefi A."/>
            <person name="Mount S.M."/>
            <person name="Moy M."/>
            <person name="Murphy B."/>
            <person name="Murphy L."/>
            <person name="Muzny D.M."/>
            <person name="Nelson D.L."/>
            <person name="Nelson D.R."/>
            <person name="Nelson K.A."/>
            <person name="Nixon K."/>
            <person name="Nusskern D.R."/>
            <person name="Pacleb J.M."/>
            <person name="Palazzolo M."/>
            <person name="Pittman G.S."/>
            <person name="Pan S."/>
            <person name="Pollard J."/>
            <person name="Puri V."/>
            <person name="Reese M.G."/>
            <person name="Reinert K."/>
            <person name="Remington K."/>
            <person name="Saunders R.D.C."/>
            <person name="Scheeler F."/>
            <person name="Shen H."/>
            <person name="Shue B.C."/>
            <person name="Siden-Kiamos I."/>
            <person name="Simpson M."/>
            <person name="Skupski M.P."/>
            <person name="Smith T.J."/>
            <person name="Spier E."/>
            <person name="Spradling A.C."/>
            <person name="Stapleton M."/>
            <person name="Strong R."/>
            <person name="Sun E."/>
            <person name="Svirskas R."/>
            <person name="Tector C."/>
            <person name="Turner R."/>
            <person name="Venter E."/>
            <person name="Wang A.H."/>
            <person name="Wang X."/>
            <person name="Wang Z.-Y."/>
            <person name="Wassarman D.A."/>
            <person name="Weinstock G.M."/>
            <person name="Weissenbach J."/>
            <person name="Williams S.M."/>
            <person name="Woodage T."/>
            <person name="Worley K.C."/>
            <person name="Wu D."/>
            <person name="Yang S."/>
            <person name="Yao Q.A."/>
            <person name="Ye J."/>
            <person name="Yeh R.-F."/>
            <person name="Zaveri J.S."/>
            <person name="Zhan M."/>
            <person name="Zhang G."/>
            <person name="Zhao Q."/>
            <person name="Zheng L."/>
            <person name="Zheng X.H."/>
            <person name="Zhong F.N."/>
            <person name="Zhong W."/>
            <person name="Zhou X."/>
            <person name="Zhu S.C."/>
            <person name="Zhu X."/>
            <person name="Smith H.O."/>
            <person name="Gibbs R.A."/>
            <person name="Myers E.W."/>
            <person name="Rubin G.M."/>
            <person name="Venter J.C."/>
        </authorList>
    </citation>
    <scope>NUCLEOTIDE SEQUENCE [LARGE SCALE GENOMIC DNA]</scope>
    <source>
        <strain>Berkeley</strain>
    </source>
</reference>
<reference key="3">
    <citation type="journal article" date="2002" name="Genome Biol.">
        <title>Annotation of the Drosophila melanogaster euchromatic genome: a systematic review.</title>
        <authorList>
            <person name="Misra S."/>
            <person name="Crosby M.A."/>
            <person name="Mungall C.J."/>
            <person name="Matthews B.B."/>
            <person name="Campbell K.S."/>
            <person name="Hradecky P."/>
            <person name="Huang Y."/>
            <person name="Kaminker J.S."/>
            <person name="Millburn G.H."/>
            <person name="Prochnik S.E."/>
            <person name="Smith C.D."/>
            <person name="Tupy J.L."/>
            <person name="Whitfield E.J."/>
            <person name="Bayraktaroglu L."/>
            <person name="Berman B.P."/>
            <person name="Bettencourt B.R."/>
            <person name="Celniker S.E."/>
            <person name="de Grey A.D.N.J."/>
            <person name="Drysdale R.A."/>
            <person name="Harris N.L."/>
            <person name="Richter J."/>
            <person name="Russo S."/>
            <person name="Schroeder A.J."/>
            <person name="Shu S.Q."/>
            <person name="Stapleton M."/>
            <person name="Yamada C."/>
            <person name="Ashburner M."/>
            <person name="Gelbart W.M."/>
            <person name="Rubin G.M."/>
            <person name="Lewis S.E."/>
        </authorList>
    </citation>
    <scope>GENOME REANNOTATION</scope>
    <source>
        <strain>Berkeley</strain>
    </source>
</reference>
<reference key="4">
    <citation type="journal article" date="2002" name="Genome Biol.">
        <title>A Drosophila full-length cDNA resource.</title>
        <authorList>
            <person name="Stapleton M."/>
            <person name="Carlson J.W."/>
            <person name="Brokstein P."/>
            <person name="Yu C."/>
            <person name="Champe M."/>
            <person name="George R.A."/>
            <person name="Guarin H."/>
            <person name="Kronmiller B."/>
            <person name="Pacleb J.M."/>
            <person name="Park S."/>
            <person name="Wan K.H."/>
            <person name="Rubin G.M."/>
            <person name="Celniker S.E."/>
        </authorList>
    </citation>
    <scope>NUCLEOTIDE SEQUENCE [LARGE SCALE MRNA]</scope>
    <source>
        <strain>Berkeley</strain>
        <tissue>Larva</tissue>
        <tissue>Pupae</tissue>
    </source>
</reference>
<reference key="5">
    <citation type="submission" date="2009-12" db="EMBL/GenBank/DDBJ databases">
        <authorList>
            <person name="Carlson J.W."/>
            <person name="Booth B."/>
            <person name="Frise E."/>
            <person name="Park S."/>
            <person name="Wan K.H."/>
            <person name="Yu C."/>
            <person name="Celniker S.E."/>
        </authorList>
    </citation>
    <scope>SEQUENCE REVISION</scope>
</reference>
<reference key="6">
    <citation type="journal article" date="2012" name="Biochem. J.">
        <title>A preliminary characterization of the cytosolic glutathione transferase proteome from Drosophila melanogaster.</title>
        <authorList>
            <person name="Saisawang C."/>
            <person name="Wongsantichon J."/>
            <person name="Ketterman A.J."/>
        </authorList>
    </citation>
    <scope>LACK OF ENZYME ACTIVITY</scope>
</reference>
<keyword id="KW-1185">Reference proteome</keyword>